<feature type="chain" id="PRO_1000046102" description="Ribosomal protein L11 methyltransferase">
    <location>
        <begin position="1"/>
        <end position="312"/>
    </location>
</feature>
<feature type="binding site" evidence="1">
    <location>
        <position position="160"/>
    </location>
    <ligand>
        <name>S-adenosyl-L-methionine</name>
        <dbReference type="ChEBI" id="CHEBI:59789"/>
    </ligand>
</feature>
<feature type="binding site" evidence="1">
    <location>
        <position position="181"/>
    </location>
    <ligand>
        <name>S-adenosyl-L-methionine</name>
        <dbReference type="ChEBI" id="CHEBI:59789"/>
    </ligand>
</feature>
<feature type="binding site" evidence="1">
    <location>
        <position position="203"/>
    </location>
    <ligand>
        <name>S-adenosyl-L-methionine</name>
        <dbReference type="ChEBI" id="CHEBI:59789"/>
    </ligand>
</feature>
<feature type="binding site" evidence="1">
    <location>
        <position position="246"/>
    </location>
    <ligand>
        <name>S-adenosyl-L-methionine</name>
        <dbReference type="ChEBI" id="CHEBI:59789"/>
    </ligand>
</feature>
<evidence type="ECO:0000255" key="1">
    <source>
        <dbReference type="HAMAP-Rule" id="MF_00735"/>
    </source>
</evidence>
<protein>
    <recommendedName>
        <fullName evidence="1">Ribosomal protein L11 methyltransferase</fullName>
        <shortName evidence="1">L11 Mtase</shortName>
        <ecNumber evidence="1">2.1.1.-</ecNumber>
    </recommendedName>
</protein>
<keyword id="KW-0963">Cytoplasm</keyword>
<keyword id="KW-0489">Methyltransferase</keyword>
<keyword id="KW-0949">S-adenosyl-L-methionine</keyword>
<keyword id="KW-0808">Transferase</keyword>
<comment type="function">
    <text evidence="1">Methylates ribosomal protein L11.</text>
</comment>
<comment type="catalytic activity">
    <reaction evidence="1">
        <text>L-lysyl-[protein] + 3 S-adenosyl-L-methionine = N(6),N(6),N(6)-trimethyl-L-lysyl-[protein] + 3 S-adenosyl-L-homocysteine + 3 H(+)</text>
        <dbReference type="Rhea" id="RHEA:54192"/>
        <dbReference type="Rhea" id="RHEA-COMP:9752"/>
        <dbReference type="Rhea" id="RHEA-COMP:13826"/>
        <dbReference type="ChEBI" id="CHEBI:15378"/>
        <dbReference type="ChEBI" id="CHEBI:29969"/>
        <dbReference type="ChEBI" id="CHEBI:57856"/>
        <dbReference type="ChEBI" id="CHEBI:59789"/>
        <dbReference type="ChEBI" id="CHEBI:61961"/>
    </reaction>
</comment>
<comment type="subcellular location">
    <subcellularLocation>
        <location evidence="1">Cytoplasm</location>
    </subcellularLocation>
</comment>
<comment type="similarity">
    <text evidence="1">Belongs to the methyltransferase superfamily. PrmA family.</text>
</comment>
<accession>Q2YT49</accession>
<name>PRMA_STAAB</name>
<sequence length="312" mass="35523">MNWTELSIIINHEAVELATNILENHGSNGVVIEDSDDLINQPEDKYGEIYALKKEDYPDKGVRLKAYFNELTYDDKLRQRIKDELLNLDELDQHNVQFSEKIIAETDWENEWKNYFHPFRASKKFTIVPSWETYAKEADEELCIELDPGMAFGTGDHPTTSMCLKAIETYVLPQHSVIDVGTGSGILSIASHLIGVKRIKALDIDEMAVSVAKENFRRNHCETLIEAVPGNLLKDETEKFDIVIANILAHIIDEMIEDAYNTLNEGGYFITSGIIKEKYEGIQSHMERVGFKIISEQHDNGWVCLVGQKVSE</sequence>
<reference key="1">
    <citation type="journal article" date="2007" name="PLoS ONE">
        <title>Molecular correlates of host specialization in Staphylococcus aureus.</title>
        <authorList>
            <person name="Herron-Olson L."/>
            <person name="Fitzgerald J.R."/>
            <person name="Musser J.M."/>
            <person name="Kapur V."/>
        </authorList>
    </citation>
    <scope>NUCLEOTIDE SEQUENCE [LARGE SCALE GENOMIC DNA]</scope>
    <source>
        <strain>bovine RF122 / ET3-1</strain>
    </source>
</reference>
<organism>
    <name type="scientific">Staphylococcus aureus (strain bovine RF122 / ET3-1)</name>
    <dbReference type="NCBI Taxonomy" id="273036"/>
    <lineage>
        <taxon>Bacteria</taxon>
        <taxon>Bacillati</taxon>
        <taxon>Bacillota</taxon>
        <taxon>Bacilli</taxon>
        <taxon>Bacillales</taxon>
        <taxon>Staphylococcaceae</taxon>
        <taxon>Staphylococcus</taxon>
    </lineage>
</organism>
<proteinExistence type="inferred from homology"/>
<dbReference type="EC" id="2.1.1.-" evidence="1"/>
<dbReference type="EMBL" id="AJ938182">
    <property type="protein sequence ID" value="CAI81139.1"/>
    <property type="molecule type" value="Genomic_DNA"/>
</dbReference>
<dbReference type="RefSeq" id="WP_001104603.1">
    <property type="nucleotide sequence ID" value="NC_007622.1"/>
</dbReference>
<dbReference type="SMR" id="Q2YT49"/>
<dbReference type="KEGG" id="sab:SAB1450c"/>
<dbReference type="HOGENOM" id="CLU_049382_0_1_9"/>
<dbReference type="GO" id="GO:0005737">
    <property type="term" value="C:cytoplasm"/>
    <property type="evidence" value="ECO:0007669"/>
    <property type="project" value="UniProtKB-SubCell"/>
</dbReference>
<dbReference type="GO" id="GO:0016279">
    <property type="term" value="F:protein-lysine N-methyltransferase activity"/>
    <property type="evidence" value="ECO:0007669"/>
    <property type="project" value="RHEA"/>
</dbReference>
<dbReference type="GO" id="GO:0032259">
    <property type="term" value="P:methylation"/>
    <property type="evidence" value="ECO:0007669"/>
    <property type="project" value="UniProtKB-KW"/>
</dbReference>
<dbReference type="CDD" id="cd02440">
    <property type="entry name" value="AdoMet_MTases"/>
    <property type="match status" value="1"/>
</dbReference>
<dbReference type="Gene3D" id="3.40.50.150">
    <property type="entry name" value="Vaccinia Virus protein VP39"/>
    <property type="match status" value="1"/>
</dbReference>
<dbReference type="HAMAP" id="MF_00735">
    <property type="entry name" value="Methyltr_PrmA"/>
    <property type="match status" value="1"/>
</dbReference>
<dbReference type="InterPro" id="IPR050078">
    <property type="entry name" value="Ribosomal_L11_MeTrfase_PrmA"/>
</dbReference>
<dbReference type="InterPro" id="IPR004498">
    <property type="entry name" value="Ribosomal_PrmA_MeTrfase"/>
</dbReference>
<dbReference type="InterPro" id="IPR029063">
    <property type="entry name" value="SAM-dependent_MTases_sf"/>
</dbReference>
<dbReference type="NCBIfam" id="TIGR00406">
    <property type="entry name" value="prmA"/>
    <property type="match status" value="1"/>
</dbReference>
<dbReference type="PANTHER" id="PTHR43648">
    <property type="entry name" value="ELECTRON TRANSFER FLAVOPROTEIN BETA SUBUNIT LYSINE METHYLTRANSFERASE"/>
    <property type="match status" value="1"/>
</dbReference>
<dbReference type="PANTHER" id="PTHR43648:SF1">
    <property type="entry name" value="ELECTRON TRANSFER FLAVOPROTEIN BETA SUBUNIT LYSINE METHYLTRANSFERASE"/>
    <property type="match status" value="1"/>
</dbReference>
<dbReference type="Pfam" id="PF06325">
    <property type="entry name" value="PrmA"/>
    <property type="match status" value="1"/>
</dbReference>
<dbReference type="PIRSF" id="PIRSF000401">
    <property type="entry name" value="RPL11_MTase"/>
    <property type="match status" value="1"/>
</dbReference>
<dbReference type="SUPFAM" id="SSF53335">
    <property type="entry name" value="S-adenosyl-L-methionine-dependent methyltransferases"/>
    <property type="match status" value="1"/>
</dbReference>
<gene>
    <name evidence="1" type="primary">prmA</name>
    <name type="ordered locus">SAB1450c</name>
</gene>